<accession>Q31ZL9</accession>
<comment type="function">
    <text evidence="1">Prevents the cell division inhibition by proteins MinC and MinD at internal division sites while permitting inhibition at polar sites. This ensures cell division at the proper site by restricting the formation of a division septum at the midpoint of the long axis of the cell.</text>
</comment>
<comment type="similarity">
    <text evidence="1">Belongs to the MinE family.</text>
</comment>
<sequence>MALLDFFLSRKKNTANIAKERLQIIVAERRRSDAEPHYLPQLRKDILEVICKYVQIDPEMVTVQLEQKDGDISILELNVTLPEAEELK</sequence>
<dbReference type="EMBL" id="CP000036">
    <property type="protein sequence ID" value="ABB66489.1"/>
    <property type="molecule type" value="Genomic_DNA"/>
</dbReference>
<dbReference type="RefSeq" id="WP_001185665.1">
    <property type="nucleotide sequence ID" value="NC_007613.1"/>
</dbReference>
<dbReference type="SMR" id="Q31ZL9"/>
<dbReference type="GeneID" id="93776260"/>
<dbReference type="KEGG" id="sbo:SBO_1896"/>
<dbReference type="HOGENOM" id="CLU_137929_2_2_6"/>
<dbReference type="Proteomes" id="UP000007067">
    <property type="component" value="Chromosome"/>
</dbReference>
<dbReference type="GO" id="GO:0051301">
    <property type="term" value="P:cell division"/>
    <property type="evidence" value="ECO:0007669"/>
    <property type="project" value="UniProtKB-KW"/>
</dbReference>
<dbReference type="GO" id="GO:0032955">
    <property type="term" value="P:regulation of division septum assembly"/>
    <property type="evidence" value="ECO:0007669"/>
    <property type="project" value="InterPro"/>
</dbReference>
<dbReference type="FunFam" id="3.30.1070.10:FF:000001">
    <property type="entry name" value="Cell division topological specificity factor"/>
    <property type="match status" value="1"/>
</dbReference>
<dbReference type="Gene3D" id="3.30.1070.10">
    <property type="entry name" value="Cell division topological specificity factor MinE"/>
    <property type="match status" value="1"/>
</dbReference>
<dbReference type="HAMAP" id="MF_00262">
    <property type="entry name" value="MinE"/>
    <property type="match status" value="1"/>
</dbReference>
<dbReference type="InterPro" id="IPR005527">
    <property type="entry name" value="MinE"/>
</dbReference>
<dbReference type="InterPro" id="IPR036707">
    <property type="entry name" value="MinE_sf"/>
</dbReference>
<dbReference type="NCBIfam" id="TIGR01215">
    <property type="entry name" value="minE"/>
    <property type="match status" value="1"/>
</dbReference>
<dbReference type="NCBIfam" id="NF001422">
    <property type="entry name" value="PRK00296.1"/>
    <property type="match status" value="1"/>
</dbReference>
<dbReference type="Pfam" id="PF03776">
    <property type="entry name" value="MinE"/>
    <property type="match status" value="1"/>
</dbReference>
<dbReference type="SUPFAM" id="SSF55229">
    <property type="entry name" value="Cell division protein MinE topological specificity domain"/>
    <property type="match status" value="1"/>
</dbReference>
<protein>
    <recommendedName>
        <fullName evidence="1">Cell division topological specificity factor</fullName>
    </recommendedName>
</protein>
<name>MINE_SHIBS</name>
<gene>
    <name evidence="1" type="primary">minE</name>
    <name type="ordered locus">SBO_1896</name>
</gene>
<feature type="chain" id="PRO_0000298189" description="Cell division topological specificity factor">
    <location>
        <begin position="1"/>
        <end position="88"/>
    </location>
</feature>
<proteinExistence type="inferred from homology"/>
<keyword id="KW-0131">Cell cycle</keyword>
<keyword id="KW-0132">Cell division</keyword>
<organism>
    <name type="scientific">Shigella boydii serotype 4 (strain Sb227)</name>
    <dbReference type="NCBI Taxonomy" id="300268"/>
    <lineage>
        <taxon>Bacteria</taxon>
        <taxon>Pseudomonadati</taxon>
        <taxon>Pseudomonadota</taxon>
        <taxon>Gammaproteobacteria</taxon>
        <taxon>Enterobacterales</taxon>
        <taxon>Enterobacteriaceae</taxon>
        <taxon>Shigella</taxon>
    </lineage>
</organism>
<reference key="1">
    <citation type="journal article" date="2005" name="Nucleic Acids Res.">
        <title>Genome dynamics and diversity of Shigella species, the etiologic agents of bacillary dysentery.</title>
        <authorList>
            <person name="Yang F."/>
            <person name="Yang J."/>
            <person name="Zhang X."/>
            <person name="Chen L."/>
            <person name="Jiang Y."/>
            <person name="Yan Y."/>
            <person name="Tang X."/>
            <person name="Wang J."/>
            <person name="Xiong Z."/>
            <person name="Dong J."/>
            <person name="Xue Y."/>
            <person name="Zhu Y."/>
            <person name="Xu X."/>
            <person name="Sun L."/>
            <person name="Chen S."/>
            <person name="Nie H."/>
            <person name="Peng J."/>
            <person name="Xu J."/>
            <person name="Wang Y."/>
            <person name="Yuan Z."/>
            <person name="Wen Y."/>
            <person name="Yao Z."/>
            <person name="Shen Y."/>
            <person name="Qiang B."/>
            <person name="Hou Y."/>
            <person name="Yu J."/>
            <person name="Jin Q."/>
        </authorList>
    </citation>
    <scope>NUCLEOTIDE SEQUENCE [LARGE SCALE GENOMIC DNA]</scope>
    <source>
        <strain>Sb227</strain>
    </source>
</reference>
<evidence type="ECO:0000255" key="1">
    <source>
        <dbReference type="HAMAP-Rule" id="MF_00262"/>
    </source>
</evidence>